<dbReference type="EC" id="6.3.5.2" evidence="1"/>
<dbReference type="EMBL" id="CP000377">
    <property type="protein sequence ID" value="ABF64108.1"/>
    <property type="molecule type" value="Genomic_DNA"/>
</dbReference>
<dbReference type="RefSeq" id="WP_011538713.1">
    <property type="nucleotide sequence ID" value="NC_008044.1"/>
</dbReference>
<dbReference type="SMR" id="Q1GGV8"/>
<dbReference type="STRING" id="292414.TM1040_1375"/>
<dbReference type="MEROPS" id="C26.957"/>
<dbReference type="KEGG" id="sit:TM1040_1375"/>
<dbReference type="eggNOG" id="COG0518">
    <property type="taxonomic scope" value="Bacteria"/>
</dbReference>
<dbReference type="eggNOG" id="COG0519">
    <property type="taxonomic scope" value="Bacteria"/>
</dbReference>
<dbReference type="HOGENOM" id="CLU_014340_0_5_5"/>
<dbReference type="OrthoDB" id="9802219at2"/>
<dbReference type="UniPathway" id="UPA00189">
    <property type="reaction ID" value="UER00296"/>
</dbReference>
<dbReference type="Proteomes" id="UP000000636">
    <property type="component" value="Chromosome"/>
</dbReference>
<dbReference type="GO" id="GO:0005829">
    <property type="term" value="C:cytosol"/>
    <property type="evidence" value="ECO:0007669"/>
    <property type="project" value="TreeGrafter"/>
</dbReference>
<dbReference type="GO" id="GO:0005524">
    <property type="term" value="F:ATP binding"/>
    <property type="evidence" value="ECO:0007669"/>
    <property type="project" value="UniProtKB-UniRule"/>
</dbReference>
<dbReference type="GO" id="GO:0003921">
    <property type="term" value="F:GMP synthase activity"/>
    <property type="evidence" value="ECO:0007669"/>
    <property type="project" value="InterPro"/>
</dbReference>
<dbReference type="CDD" id="cd01742">
    <property type="entry name" value="GATase1_GMP_Synthase"/>
    <property type="match status" value="1"/>
</dbReference>
<dbReference type="CDD" id="cd01997">
    <property type="entry name" value="GMP_synthase_C"/>
    <property type="match status" value="1"/>
</dbReference>
<dbReference type="FunFam" id="3.30.300.10:FF:000002">
    <property type="entry name" value="GMP synthase [glutamine-hydrolyzing]"/>
    <property type="match status" value="1"/>
</dbReference>
<dbReference type="FunFam" id="3.40.50.620:FF:000001">
    <property type="entry name" value="GMP synthase [glutamine-hydrolyzing]"/>
    <property type="match status" value="1"/>
</dbReference>
<dbReference type="FunFam" id="3.40.50.880:FF:000001">
    <property type="entry name" value="GMP synthase [glutamine-hydrolyzing]"/>
    <property type="match status" value="1"/>
</dbReference>
<dbReference type="Gene3D" id="3.30.300.10">
    <property type="match status" value="1"/>
</dbReference>
<dbReference type="Gene3D" id="3.40.50.880">
    <property type="match status" value="1"/>
</dbReference>
<dbReference type="Gene3D" id="3.40.50.620">
    <property type="entry name" value="HUPs"/>
    <property type="match status" value="1"/>
</dbReference>
<dbReference type="HAMAP" id="MF_00344">
    <property type="entry name" value="GMP_synthase"/>
    <property type="match status" value="1"/>
</dbReference>
<dbReference type="InterPro" id="IPR029062">
    <property type="entry name" value="Class_I_gatase-like"/>
</dbReference>
<dbReference type="InterPro" id="IPR017926">
    <property type="entry name" value="GATASE"/>
</dbReference>
<dbReference type="InterPro" id="IPR001674">
    <property type="entry name" value="GMP_synth_C"/>
</dbReference>
<dbReference type="InterPro" id="IPR004739">
    <property type="entry name" value="GMP_synth_GATase"/>
</dbReference>
<dbReference type="InterPro" id="IPR022955">
    <property type="entry name" value="GMP_synthase"/>
</dbReference>
<dbReference type="InterPro" id="IPR025777">
    <property type="entry name" value="GMPS_ATP_PPase_dom"/>
</dbReference>
<dbReference type="InterPro" id="IPR014729">
    <property type="entry name" value="Rossmann-like_a/b/a_fold"/>
</dbReference>
<dbReference type="NCBIfam" id="TIGR00884">
    <property type="entry name" value="guaA_Cterm"/>
    <property type="match status" value="1"/>
</dbReference>
<dbReference type="NCBIfam" id="TIGR00888">
    <property type="entry name" value="guaA_Nterm"/>
    <property type="match status" value="1"/>
</dbReference>
<dbReference type="NCBIfam" id="NF000848">
    <property type="entry name" value="PRK00074.1"/>
    <property type="match status" value="1"/>
</dbReference>
<dbReference type="PANTHER" id="PTHR11922:SF2">
    <property type="entry name" value="GMP SYNTHASE [GLUTAMINE-HYDROLYZING]"/>
    <property type="match status" value="1"/>
</dbReference>
<dbReference type="PANTHER" id="PTHR11922">
    <property type="entry name" value="GMP SYNTHASE-RELATED"/>
    <property type="match status" value="1"/>
</dbReference>
<dbReference type="Pfam" id="PF00117">
    <property type="entry name" value="GATase"/>
    <property type="match status" value="1"/>
</dbReference>
<dbReference type="Pfam" id="PF00958">
    <property type="entry name" value="GMP_synt_C"/>
    <property type="match status" value="1"/>
</dbReference>
<dbReference type="Pfam" id="PF03054">
    <property type="entry name" value="tRNA_Me_trans"/>
    <property type="match status" value="1"/>
</dbReference>
<dbReference type="PRINTS" id="PR00097">
    <property type="entry name" value="ANTSNTHASEII"/>
</dbReference>
<dbReference type="PRINTS" id="PR00096">
    <property type="entry name" value="GATASE"/>
</dbReference>
<dbReference type="SUPFAM" id="SSF52402">
    <property type="entry name" value="Adenine nucleotide alpha hydrolases-like"/>
    <property type="match status" value="1"/>
</dbReference>
<dbReference type="SUPFAM" id="SSF52317">
    <property type="entry name" value="Class I glutamine amidotransferase-like"/>
    <property type="match status" value="1"/>
</dbReference>
<dbReference type="SUPFAM" id="SSF54810">
    <property type="entry name" value="GMP synthetase C-terminal dimerisation domain"/>
    <property type="match status" value="1"/>
</dbReference>
<dbReference type="PROSITE" id="PS51273">
    <property type="entry name" value="GATASE_TYPE_1"/>
    <property type="match status" value="1"/>
</dbReference>
<dbReference type="PROSITE" id="PS51553">
    <property type="entry name" value="GMPS_ATP_PPASE"/>
    <property type="match status" value="1"/>
</dbReference>
<evidence type="ECO:0000255" key="1">
    <source>
        <dbReference type="HAMAP-Rule" id="MF_00344"/>
    </source>
</evidence>
<reference key="1">
    <citation type="submission" date="2006-05" db="EMBL/GenBank/DDBJ databases">
        <title>Complete sequence of chromosome of Silicibacter sp. TM1040.</title>
        <authorList>
            <consortium name="US DOE Joint Genome Institute"/>
            <person name="Copeland A."/>
            <person name="Lucas S."/>
            <person name="Lapidus A."/>
            <person name="Barry K."/>
            <person name="Detter J.C."/>
            <person name="Glavina del Rio T."/>
            <person name="Hammon N."/>
            <person name="Israni S."/>
            <person name="Dalin E."/>
            <person name="Tice H."/>
            <person name="Pitluck S."/>
            <person name="Brettin T."/>
            <person name="Bruce D."/>
            <person name="Han C."/>
            <person name="Tapia R."/>
            <person name="Goodwin L."/>
            <person name="Thompson L.S."/>
            <person name="Gilna P."/>
            <person name="Schmutz J."/>
            <person name="Larimer F."/>
            <person name="Land M."/>
            <person name="Hauser L."/>
            <person name="Kyrpides N."/>
            <person name="Kim E."/>
            <person name="Belas R."/>
            <person name="Moran M.A."/>
            <person name="Buchan A."/>
            <person name="Gonzalez J.M."/>
            <person name="Schell M.A."/>
            <person name="Sun F."/>
            <person name="Richardson P."/>
        </authorList>
    </citation>
    <scope>NUCLEOTIDE SEQUENCE [LARGE SCALE GENOMIC DNA]</scope>
    <source>
        <strain>TM1040</strain>
    </source>
</reference>
<keyword id="KW-0067">ATP-binding</keyword>
<keyword id="KW-0315">Glutamine amidotransferase</keyword>
<keyword id="KW-0332">GMP biosynthesis</keyword>
<keyword id="KW-0436">Ligase</keyword>
<keyword id="KW-0547">Nucleotide-binding</keyword>
<keyword id="KW-0658">Purine biosynthesis</keyword>
<keyword id="KW-1185">Reference proteome</keyword>
<comment type="function">
    <text evidence="1">Catalyzes the synthesis of GMP from XMP.</text>
</comment>
<comment type="catalytic activity">
    <reaction evidence="1">
        <text>XMP + L-glutamine + ATP + H2O = GMP + L-glutamate + AMP + diphosphate + 2 H(+)</text>
        <dbReference type="Rhea" id="RHEA:11680"/>
        <dbReference type="ChEBI" id="CHEBI:15377"/>
        <dbReference type="ChEBI" id="CHEBI:15378"/>
        <dbReference type="ChEBI" id="CHEBI:29985"/>
        <dbReference type="ChEBI" id="CHEBI:30616"/>
        <dbReference type="ChEBI" id="CHEBI:33019"/>
        <dbReference type="ChEBI" id="CHEBI:57464"/>
        <dbReference type="ChEBI" id="CHEBI:58115"/>
        <dbReference type="ChEBI" id="CHEBI:58359"/>
        <dbReference type="ChEBI" id="CHEBI:456215"/>
        <dbReference type="EC" id="6.3.5.2"/>
    </reaction>
</comment>
<comment type="pathway">
    <text evidence="1">Purine metabolism; GMP biosynthesis; GMP from XMP (L-Gln route): step 1/1.</text>
</comment>
<comment type="subunit">
    <text evidence="1">Homodimer.</text>
</comment>
<organism>
    <name type="scientific">Ruegeria sp. (strain TM1040)</name>
    <name type="common">Silicibacter sp.</name>
    <dbReference type="NCBI Taxonomy" id="292414"/>
    <lineage>
        <taxon>Bacteria</taxon>
        <taxon>Pseudomonadati</taxon>
        <taxon>Pseudomonadota</taxon>
        <taxon>Alphaproteobacteria</taxon>
        <taxon>Rhodobacterales</taxon>
        <taxon>Roseobacteraceae</taxon>
        <taxon>Ruegeria</taxon>
    </lineage>
</organism>
<accession>Q1GGV8</accession>
<name>GUAA_RUEST</name>
<sequence length="520" mass="57952">MTETAHDRLLIIDFGSQVTQLIARRLRELNVYCEIHPYQNVTMDFVREFAPKAVIFSGGPDSVTREGSPRAPQEIFDYGVPILGICYGQQVMMHQLGGTVQSGHGTAEFGRAYVTPTEERIDMLSGWFLDQTEQVWMSHGDHVSEIAPGFKVYGTSPNAPFAITADLERNFYAVQFHPEVHHTPNGKTLYENFVRLAGFSGDWTMGAYREQMVETIREQVGDKKVICALSGGVDSSVAAALIHEAIGDQLTCVFVDHGLLRKNEAEEVVGMFRDHMNLQVIHADETELFLGELEGQSDPETKRKIIGKLFIDVFQKYADQIEGAEFLAQGTLYPDVIESVSFSGGPSVTIKSHHNVGGLPEKMGLKLVEPLRELFKDEVRALGRELGLPDSFIGRHPFPGPGLAIRCPGEITRDKLDILREADAIYIDQIRKHGLYDEIWQAFVAILPVRTVGVMGDGRTYDYACALRAVTSVDGMTADYYPFSHEFLGETATRIINEVKGINRCTYDITSKPPGTIEWE</sequence>
<gene>
    <name evidence="1" type="primary">guaA</name>
    <name type="ordered locus">TM1040_1375</name>
</gene>
<protein>
    <recommendedName>
        <fullName evidence="1">GMP synthase [glutamine-hydrolyzing]</fullName>
        <ecNumber evidence="1">6.3.5.2</ecNumber>
    </recommendedName>
    <alternativeName>
        <fullName evidence="1">GMP synthetase</fullName>
    </alternativeName>
    <alternativeName>
        <fullName evidence="1">Glutamine amidotransferase</fullName>
    </alternativeName>
</protein>
<feature type="chain" id="PRO_1000120416" description="GMP synthase [glutamine-hydrolyzing]">
    <location>
        <begin position="1"/>
        <end position="520"/>
    </location>
</feature>
<feature type="domain" description="Glutamine amidotransferase type-1" evidence="1">
    <location>
        <begin position="8"/>
        <end position="202"/>
    </location>
</feature>
<feature type="domain" description="GMPS ATP-PPase" evidence="1">
    <location>
        <begin position="203"/>
        <end position="395"/>
    </location>
</feature>
<feature type="active site" description="Nucleophile" evidence="1">
    <location>
        <position position="86"/>
    </location>
</feature>
<feature type="active site" evidence="1">
    <location>
        <position position="177"/>
    </location>
</feature>
<feature type="active site" evidence="1">
    <location>
        <position position="179"/>
    </location>
</feature>
<feature type="binding site" evidence="1">
    <location>
        <begin position="230"/>
        <end position="236"/>
    </location>
    <ligand>
        <name>ATP</name>
        <dbReference type="ChEBI" id="CHEBI:30616"/>
    </ligand>
</feature>
<proteinExistence type="inferred from homology"/>